<name>TRUA_METS3</name>
<feature type="chain" id="PRO_1000194582" description="tRNA pseudouridine synthase A">
    <location>
        <begin position="1"/>
        <end position="290"/>
    </location>
</feature>
<feature type="active site" description="Nucleophile" evidence="1">
    <location>
        <position position="56"/>
    </location>
</feature>
<feature type="binding site" evidence="1">
    <location>
        <position position="109"/>
    </location>
    <ligand>
        <name>substrate</name>
    </ligand>
</feature>
<gene>
    <name evidence="1" type="primary">truA</name>
    <name type="ordered locus">Msm_0855</name>
</gene>
<reference key="1">
    <citation type="journal article" date="2007" name="Proc. Natl. Acad. Sci. U.S.A.">
        <title>Genomic and metabolic adaptations of Methanobrevibacter smithii to the human gut.</title>
        <authorList>
            <person name="Samuel B.S."/>
            <person name="Hansen E.E."/>
            <person name="Manchester J.K."/>
            <person name="Coutinho P.M."/>
            <person name="Henrissat B."/>
            <person name="Fulton R."/>
            <person name="Latreille P."/>
            <person name="Kim K."/>
            <person name="Wilson R.K."/>
            <person name="Gordon J.I."/>
        </authorList>
    </citation>
    <scope>NUCLEOTIDE SEQUENCE [LARGE SCALE GENOMIC DNA]</scope>
    <source>
        <strain>ATCC 35061 / DSM 861 / OCM 144 / PS</strain>
    </source>
</reference>
<sequence length="290" mass="34124">MKRTALKIGYIGTNFHGFQRQPDLRTVEEELIYHLRKLGYIDDLKKSRFRIAGRTDAGVHSLGNVISFQSEKEVRVNEINNSLPDDIQILAKAPVRFGFKPRYAEMRQYRYVLFRSDLDLYKLNEVAEIFKGTHNFTNFTKRFQKTTTRTIDDIKITKANLNDYHKKEFPNLHDTLSPVFVDIYGESFLWNMVRKMMRVFVDVAIGKLSLEKVEELLNPAENDPRANIKVLDPDYLILMDIKYDGVKFVYDDYACERFKRNLVDSLGDLQRKYAIRESMIKSLEDLERIN</sequence>
<proteinExistence type="inferred from homology"/>
<evidence type="ECO:0000255" key="1">
    <source>
        <dbReference type="HAMAP-Rule" id="MF_00171"/>
    </source>
</evidence>
<dbReference type="EC" id="5.4.99.12" evidence="1"/>
<dbReference type="EMBL" id="CP000678">
    <property type="protein sequence ID" value="ABQ87060.1"/>
    <property type="molecule type" value="Genomic_DNA"/>
</dbReference>
<dbReference type="RefSeq" id="WP_011954128.1">
    <property type="nucleotide sequence ID" value="NZ_CP117965.1"/>
</dbReference>
<dbReference type="SMR" id="A5ULI2"/>
<dbReference type="STRING" id="420247.Msm_0855"/>
<dbReference type="EnsemblBacteria" id="ABQ87060">
    <property type="protein sequence ID" value="ABQ87060"/>
    <property type="gene ID" value="Msm_0855"/>
</dbReference>
<dbReference type="GeneID" id="78817488"/>
<dbReference type="KEGG" id="msi:Msm_0855"/>
<dbReference type="PATRIC" id="fig|420247.28.peg.852"/>
<dbReference type="eggNOG" id="arCOG04449">
    <property type="taxonomic scope" value="Archaea"/>
</dbReference>
<dbReference type="HOGENOM" id="CLU_014673_4_2_2"/>
<dbReference type="Proteomes" id="UP000001992">
    <property type="component" value="Chromosome"/>
</dbReference>
<dbReference type="GO" id="GO:0003723">
    <property type="term" value="F:RNA binding"/>
    <property type="evidence" value="ECO:0007669"/>
    <property type="project" value="InterPro"/>
</dbReference>
<dbReference type="GO" id="GO:0160147">
    <property type="term" value="F:tRNA pseudouridine(38-40) synthase activity"/>
    <property type="evidence" value="ECO:0007669"/>
    <property type="project" value="UniProtKB-EC"/>
</dbReference>
<dbReference type="GO" id="GO:0031119">
    <property type="term" value="P:tRNA pseudouridine synthesis"/>
    <property type="evidence" value="ECO:0007669"/>
    <property type="project" value="UniProtKB-UniRule"/>
</dbReference>
<dbReference type="Gene3D" id="3.30.70.660">
    <property type="entry name" value="Pseudouridine synthase I, catalytic domain, C-terminal subdomain"/>
    <property type="match status" value="1"/>
</dbReference>
<dbReference type="Gene3D" id="3.30.70.580">
    <property type="entry name" value="Pseudouridine synthase I, catalytic domain, N-terminal subdomain"/>
    <property type="match status" value="1"/>
</dbReference>
<dbReference type="HAMAP" id="MF_00171">
    <property type="entry name" value="TruA"/>
    <property type="match status" value="1"/>
</dbReference>
<dbReference type="InterPro" id="IPR020103">
    <property type="entry name" value="PsdUridine_synth_cat_dom_sf"/>
</dbReference>
<dbReference type="InterPro" id="IPR001406">
    <property type="entry name" value="PsdUridine_synth_TruA"/>
</dbReference>
<dbReference type="InterPro" id="IPR020097">
    <property type="entry name" value="PsdUridine_synth_TruA_a/b_dom"/>
</dbReference>
<dbReference type="InterPro" id="IPR020095">
    <property type="entry name" value="PsdUridine_synth_TruA_C"/>
</dbReference>
<dbReference type="InterPro" id="IPR020094">
    <property type="entry name" value="TruA/RsuA/RluB/E/F_N"/>
</dbReference>
<dbReference type="NCBIfam" id="TIGR00071">
    <property type="entry name" value="hisT_truA"/>
    <property type="match status" value="1"/>
</dbReference>
<dbReference type="PANTHER" id="PTHR11142">
    <property type="entry name" value="PSEUDOURIDYLATE SYNTHASE"/>
    <property type="match status" value="1"/>
</dbReference>
<dbReference type="PANTHER" id="PTHR11142:SF0">
    <property type="entry name" value="TRNA PSEUDOURIDINE SYNTHASE-LIKE 1"/>
    <property type="match status" value="1"/>
</dbReference>
<dbReference type="Pfam" id="PF01416">
    <property type="entry name" value="PseudoU_synth_1"/>
    <property type="match status" value="1"/>
</dbReference>
<dbReference type="PIRSF" id="PIRSF001430">
    <property type="entry name" value="tRNA_psdUrid_synth"/>
    <property type="match status" value="1"/>
</dbReference>
<dbReference type="SUPFAM" id="SSF55120">
    <property type="entry name" value="Pseudouridine synthase"/>
    <property type="match status" value="1"/>
</dbReference>
<comment type="function">
    <text evidence="1">Formation of pseudouridine at positions 38, 39 and 40 in the anticodon stem and loop of transfer RNAs.</text>
</comment>
<comment type="catalytic activity">
    <reaction evidence="1">
        <text>uridine(38/39/40) in tRNA = pseudouridine(38/39/40) in tRNA</text>
        <dbReference type="Rhea" id="RHEA:22376"/>
        <dbReference type="Rhea" id="RHEA-COMP:10085"/>
        <dbReference type="Rhea" id="RHEA-COMP:10087"/>
        <dbReference type="ChEBI" id="CHEBI:65314"/>
        <dbReference type="ChEBI" id="CHEBI:65315"/>
        <dbReference type="EC" id="5.4.99.12"/>
    </reaction>
</comment>
<comment type="similarity">
    <text evidence="1">Belongs to the tRNA pseudouridine synthase TruA family.</text>
</comment>
<accession>A5ULI2</accession>
<protein>
    <recommendedName>
        <fullName evidence="1">tRNA pseudouridine synthase A</fullName>
        <ecNumber evidence="1">5.4.99.12</ecNumber>
    </recommendedName>
    <alternativeName>
        <fullName evidence="1">tRNA pseudouridine(38-40) synthase</fullName>
    </alternativeName>
    <alternativeName>
        <fullName evidence="1">tRNA pseudouridylate synthase I</fullName>
    </alternativeName>
    <alternativeName>
        <fullName evidence="1">tRNA-uridine isomerase I</fullName>
    </alternativeName>
</protein>
<keyword id="KW-0413">Isomerase</keyword>
<keyword id="KW-0819">tRNA processing</keyword>
<organism>
    <name type="scientific">Methanobrevibacter smithii (strain ATCC 35061 / DSM 861 / OCM 144 / PS)</name>
    <dbReference type="NCBI Taxonomy" id="420247"/>
    <lineage>
        <taxon>Archaea</taxon>
        <taxon>Methanobacteriati</taxon>
        <taxon>Methanobacteriota</taxon>
        <taxon>Methanomada group</taxon>
        <taxon>Methanobacteria</taxon>
        <taxon>Methanobacteriales</taxon>
        <taxon>Methanobacteriaceae</taxon>
        <taxon>Methanobrevibacter</taxon>
    </lineage>
</organism>